<gene>
    <name type="ORF">RCOM_0770240</name>
</gene>
<protein>
    <recommendedName>
        <fullName>CASP-like protein 1B1</fullName>
        <shortName>RcCASPL1B1</shortName>
    </recommendedName>
</protein>
<reference key="1">
    <citation type="journal article" date="2010" name="Nat. Biotechnol.">
        <title>Draft genome sequence of the oilseed species Ricinus communis.</title>
        <authorList>
            <person name="Chan A.P."/>
            <person name="Crabtree J."/>
            <person name="Zhao Q."/>
            <person name="Lorenzi H."/>
            <person name="Orvis J."/>
            <person name="Puiu D."/>
            <person name="Melake-Berhan A."/>
            <person name="Jones K.M."/>
            <person name="Redman J."/>
            <person name="Chen G."/>
            <person name="Cahoon E.B."/>
            <person name="Gedil M."/>
            <person name="Stanke M."/>
            <person name="Haas B.J."/>
            <person name="Wortman J.R."/>
            <person name="Fraser-Liggett C.M."/>
            <person name="Ravel J."/>
            <person name="Rabinowicz P.D."/>
        </authorList>
    </citation>
    <scope>NUCLEOTIDE SEQUENCE [LARGE SCALE GENOMIC DNA]</scope>
    <source>
        <strain>cv. Hale</strain>
    </source>
</reference>
<reference key="2">
    <citation type="journal article" date="2014" name="Plant Physiol.">
        <title>Functional and evolutionary analysis of the CASPARIAN STRIP MEMBRANE DOMAIN PROTEIN family.</title>
        <authorList>
            <person name="Roppolo D."/>
            <person name="Boeckmann B."/>
            <person name="Pfister A."/>
            <person name="Boutet E."/>
            <person name="Rubio M.C."/>
            <person name="Denervaud-Tendon V."/>
            <person name="Vermeer J.E."/>
            <person name="Gheyselinck J."/>
            <person name="Xenarios I."/>
            <person name="Geldner N."/>
        </authorList>
    </citation>
    <scope>GENE FAMILY</scope>
    <scope>NOMENCLATURE</scope>
</reference>
<keyword id="KW-1003">Cell membrane</keyword>
<keyword id="KW-0472">Membrane</keyword>
<keyword id="KW-1185">Reference proteome</keyword>
<keyword id="KW-0812">Transmembrane</keyword>
<keyword id="KW-1133">Transmembrane helix</keyword>
<comment type="subunit">
    <text evidence="1">Homodimer and heterodimers.</text>
</comment>
<comment type="subcellular location">
    <subcellularLocation>
        <location evidence="1">Cell membrane</location>
        <topology evidence="1">Multi-pass membrane protein</topology>
    </subcellularLocation>
</comment>
<comment type="similarity">
    <text evidence="3">Belongs to the Casparian strip membrane proteins (CASP) family.</text>
</comment>
<sequence>MALVNAEKPEVGSSPSSLGPRNKSWVLLMLRFVAFLATAAATIVMAANRETKTFVVATIGSTPIKATVTAKFQHTPAFVFFVIANGMGSIHNLVMIAGDTFVRKFDYKGLRWVTVAILDMLTAALISGGVNAAVFMAELGKNGNSHAKWNKICDRFGSFCDHGGAAIIASFIGLLLMLVISIISIIKLLKPKSPLVDSHVLAP</sequence>
<accession>B9SV63</accession>
<name>CSPLC_RICCO</name>
<feature type="chain" id="PRO_0000391574" description="CASP-like protein 1B1">
    <location>
        <begin position="1"/>
        <end position="203"/>
    </location>
</feature>
<feature type="topological domain" description="Cytoplasmic" evidence="2">
    <location>
        <begin position="1"/>
        <end position="24"/>
    </location>
</feature>
<feature type="transmembrane region" description="Helical" evidence="2">
    <location>
        <begin position="25"/>
        <end position="45"/>
    </location>
</feature>
<feature type="topological domain" description="Extracellular" evidence="2">
    <location>
        <begin position="46"/>
        <end position="76"/>
    </location>
</feature>
<feature type="transmembrane region" description="Helical" evidence="2">
    <location>
        <begin position="77"/>
        <end position="97"/>
    </location>
</feature>
<feature type="topological domain" description="Cytoplasmic" evidence="2">
    <location>
        <begin position="98"/>
        <end position="114"/>
    </location>
</feature>
<feature type="transmembrane region" description="Helical" evidence="2">
    <location>
        <begin position="115"/>
        <end position="135"/>
    </location>
</feature>
<feature type="topological domain" description="Extracellular" evidence="2">
    <location>
        <begin position="136"/>
        <end position="165"/>
    </location>
</feature>
<feature type="transmembrane region" description="Helical" evidence="2">
    <location>
        <begin position="166"/>
        <end position="186"/>
    </location>
</feature>
<feature type="topological domain" description="Cytoplasmic" evidence="2">
    <location>
        <begin position="187"/>
        <end position="203"/>
    </location>
</feature>
<dbReference type="EMBL" id="EQ974162">
    <property type="protein sequence ID" value="EEF32485.1"/>
    <property type="molecule type" value="Genomic_DNA"/>
</dbReference>
<dbReference type="SMR" id="B9SV63"/>
<dbReference type="FunCoup" id="B9SV63">
    <property type="interactions" value="371"/>
</dbReference>
<dbReference type="STRING" id="3988.B9SV63"/>
<dbReference type="KEGG" id="rcu:8283904"/>
<dbReference type="eggNOG" id="ENOG502RYH6">
    <property type="taxonomic scope" value="Eukaryota"/>
</dbReference>
<dbReference type="InParanoid" id="B9SV63"/>
<dbReference type="OMA" id="HNLVMIA"/>
<dbReference type="OrthoDB" id="610574at2759"/>
<dbReference type="Proteomes" id="UP000008311">
    <property type="component" value="Unassembled WGS sequence"/>
</dbReference>
<dbReference type="GO" id="GO:0005886">
    <property type="term" value="C:plasma membrane"/>
    <property type="evidence" value="ECO:0000318"/>
    <property type="project" value="GO_Central"/>
</dbReference>
<dbReference type="InterPro" id="IPR006459">
    <property type="entry name" value="CASP/CASPL"/>
</dbReference>
<dbReference type="InterPro" id="IPR006702">
    <property type="entry name" value="CASP_dom"/>
</dbReference>
<dbReference type="InterPro" id="IPR044173">
    <property type="entry name" value="CASPL"/>
</dbReference>
<dbReference type="NCBIfam" id="TIGR01569">
    <property type="entry name" value="A_tha_TIGR01569"/>
    <property type="match status" value="1"/>
</dbReference>
<dbReference type="PANTHER" id="PTHR36488">
    <property type="entry name" value="CASP-LIKE PROTEIN 1U1"/>
    <property type="match status" value="1"/>
</dbReference>
<dbReference type="PANTHER" id="PTHR36488:SF8">
    <property type="entry name" value="CASP-LIKE PROTEIN 1U1"/>
    <property type="match status" value="1"/>
</dbReference>
<dbReference type="Pfam" id="PF04535">
    <property type="entry name" value="CASP_dom"/>
    <property type="match status" value="1"/>
</dbReference>
<organism>
    <name type="scientific">Ricinus communis</name>
    <name type="common">Castor bean</name>
    <dbReference type="NCBI Taxonomy" id="3988"/>
    <lineage>
        <taxon>Eukaryota</taxon>
        <taxon>Viridiplantae</taxon>
        <taxon>Streptophyta</taxon>
        <taxon>Embryophyta</taxon>
        <taxon>Tracheophyta</taxon>
        <taxon>Spermatophyta</taxon>
        <taxon>Magnoliopsida</taxon>
        <taxon>eudicotyledons</taxon>
        <taxon>Gunneridae</taxon>
        <taxon>Pentapetalae</taxon>
        <taxon>rosids</taxon>
        <taxon>fabids</taxon>
        <taxon>Malpighiales</taxon>
        <taxon>Euphorbiaceae</taxon>
        <taxon>Acalyphoideae</taxon>
        <taxon>Acalypheae</taxon>
        <taxon>Ricinus</taxon>
    </lineage>
</organism>
<proteinExistence type="evidence at transcript level"/>
<evidence type="ECO:0000250" key="1"/>
<evidence type="ECO:0000255" key="2"/>
<evidence type="ECO:0000305" key="3"/>